<gene>
    <name type="primary">ampG1</name>
    <name type="ordered locus">RT0462</name>
</gene>
<comment type="subcellular location">
    <subcellularLocation>
        <location evidence="1">Cell inner membrane</location>
        <topology evidence="1">Multi-pass membrane protein</topology>
    </subcellularLocation>
</comment>
<comment type="similarity">
    <text evidence="3">Belongs to the major facilitator superfamily.</text>
</comment>
<organism>
    <name type="scientific">Rickettsia typhi (strain ATCC VR-144 / Wilmington)</name>
    <dbReference type="NCBI Taxonomy" id="257363"/>
    <lineage>
        <taxon>Bacteria</taxon>
        <taxon>Pseudomonadati</taxon>
        <taxon>Pseudomonadota</taxon>
        <taxon>Alphaproteobacteria</taxon>
        <taxon>Rickettsiales</taxon>
        <taxon>Rickettsiaceae</taxon>
        <taxon>Rickettsieae</taxon>
        <taxon>Rickettsia</taxon>
        <taxon>typhus group</taxon>
    </lineage>
</organism>
<accession>Q68WQ5</accession>
<keyword id="KW-0997">Cell inner membrane</keyword>
<keyword id="KW-1003">Cell membrane</keyword>
<keyword id="KW-0472">Membrane</keyword>
<keyword id="KW-0812">Transmembrane</keyword>
<keyword id="KW-1133">Transmembrane helix</keyword>
<keyword id="KW-0813">Transport</keyword>
<sequence>MLKNSHVCIIIWLFGFISGFNIMITGNTLNYWFAKKDIALQTIGILSFITLPYSINFLLAPVFDTVQIKCLNKILGHRLSWICLTSTTLISLTSILSFLDPGTDLVLLSFIAFIISFFSATQDTILSALRTEIVPKELLGFTSGIYIFGYRVGMLLASSGAIYLSIYLTFNKIYQIFACVIFVYLILLILVSRYTNSVDVIEENTSYFYVARCYTMEEMHLKNEFFIKHYFNFFKNCISAYLLKIFSGSHVYRNDISLAYFIVLILIFLVLYRLPDNLINVMINPFLLHLGYNAFEIASVCKFCGVIGAIIGGLIGGIIMKYKNMLYSILLFGIIHALSHILFILLEVNGKNSLILFITIGIESITGGMTMTAYIAFISSLCQGKFRATQYSLLSSMMGISRSIFPIISGYMVVNFGWQNFFLFTTIITIPSLLILLKIQTKL</sequence>
<reference key="1">
    <citation type="journal article" date="2004" name="J. Bacteriol.">
        <title>Complete genome sequence of Rickettsia typhi and comparison with sequences of other Rickettsiae.</title>
        <authorList>
            <person name="McLeod M.P."/>
            <person name="Qin X."/>
            <person name="Karpathy S.E."/>
            <person name="Gioia J."/>
            <person name="Highlander S.K."/>
            <person name="Fox G.E."/>
            <person name="McNeill T.Z."/>
            <person name="Jiang H."/>
            <person name="Muzny D."/>
            <person name="Jacob L.S."/>
            <person name="Hawes A.C."/>
            <person name="Sodergren E."/>
            <person name="Gill R."/>
            <person name="Hume J."/>
            <person name="Morgan M."/>
            <person name="Fan G."/>
            <person name="Amin A.G."/>
            <person name="Gibbs R.A."/>
            <person name="Hong C."/>
            <person name="Yu X.-J."/>
            <person name="Walker D.H."/>
            <person name="Weinstock G.M."/>
        </authorList>
    </citation>
    <scope>NUCLEOTIDE SEQUENCE [LARGE SCALE GENOMIC DNA]</scope>
    <source>
        <strain>ATCC VR-144 / Wilmington</strain>
    </source>
</reference>
<feature type="chain" id="PRO_0000281102" description="Putative transporter AmpG 1">
    <location>
        <begin position="1"/>
        <end position="443"/>
    </location>
</feature>
<feature type="transmembrane region" description="Helical" evidence="2">
    <location>
        <begin position="6"/>
        <end position="26"/>
    </location>
</feature>
<feature type="transmembrane region" description="Helical" evidence="2">
    <location>
        <begin position="43"/>
        <end position="63"/>
    </location>
</feature>
<feature type="transmembrane region" description="Helical" evidence="2">
    <location>
        <begin position="74"/>
        <end position="96"/>
    </location>
</feature>
<feature type="transmembrane region" description="Helical" evidence="2">
    <location>
        <begin position="106"/>
        <end position="128"/>
    </location>
</feature>
<feature type="transmembrane region" description="Helical" evidence="2">
    <location>
        <begin position="144"/>
        <end position="164"/>
    </location>
</feature>
<feature type="transmembrane region" description="Helical" evidence="2">
    <location>
        <begin position="172"/>
        <end position="192"/>
    </location>
</feature>
<feature type="transmembrane region" description="Helical" evidence="2">
    <location>
        <begin position="255"/>
        <end position="275"/>
    </location>
</feature>
<feature type="transmembrane region" description="Helical" evidence="2">
    <location>
        <begin position="300"/>
        <end position="320"/>
    </location>
</feature>
<feature type="transmembrane region" description="Helical" evidence="2">
    <location>
        <begin position="326"/>
        <end position="346"/>
    </location>
</feature>
<feature type="transmembrane region" description="Helical" evidence="2">
    <location>
        <begin position="355"/>
        <end position="375"/>
    </location>
</feature>
<feature type="transmembrane region" description="Helical" evidence="2">
    <location>
        <begin position="394"/>
        <end position="414"/>
    </location>
</feature>
<feature type="transmembrane region" description="Helical" evidence="2">
    <location>
        <begin position="416"/>
        <end position="436"/>
    </location>
</feature>
<protein>
    <recommendedName>
        <fullName>Putative transporter AmpG 1</fullName>
    </recommendedName>
</protein>
<evidence type="ECO:0000250" key="1"/>
<evidence type="ECO:0000255" key="2"/>
<evidence type="ECO:0000305" key="3"/>
<dbReference type="EMBL" id="AE017197">
    <property type="protein sequence ID" value="AAU03937.1"/>
    <property type="molecule type" value="Genomic_DNA"/>
</dbReference>
<dbReference type="RefSeq" id="WP_011190920.1">
    <property type="nucleotide sequence ID" value="NC_006142.1"/>
</dbReference>
<dbReference type="SMR" id="Q68WQ5"/>
<dbReference type="KEGG" id="rty:RT0462"/>
<dbReference type="eggNOG" id="COG2807">
    <property type="taxonomic scope" value="Bacteria"/>
</dbReference>
<dbReference type="HOGENOM" id="CLU_029352_1_2_5"/>
<dbReference type="OrthoDB" id="9787815at2"/>
<dbReference type="Proteomes" id="UP000000604">
    <property type="component" value="Chromosome"/>
</dbReference>
<dbReference type="GO" id="GO:0005886">
    <property type="term" value="C:plasma membrane"/>
    <property type="evidence" value="ECO:0007669"/>
    <property type="project" value="UniProtKB-SubCell"/>
</dbReference>
<dbReference type="GO" id="GO:0022857">
    <property type="term" value="F:transmembrane transporter activity"/>
    <property type="evidence" value="ECO:0007669"/>
    <property type="project" value="InterPro"/>
</dbReference>
<dbReference type="Gene3D" id="1.20.1250.20">
    <property type="entry name" value="MFS general substrate transporter like domains"/>
    <property type="match status" value="2"/>
</dbReference>
<dbReference type="InterPro" id="IPR004752">
    <property type="entry name" value="AmpG_permease/AT-1"/>
</dbReference>
<dbReference type="InterPro" id="IPR011701">
    <property type="entry name" value="MFS"/>
</dbReference>
<dbReference type="InterPro" id="IPR020846">
    <property type="entry name" value="MFS_dom"/>
</dbReference>
<dbReference type="InterPro" id="IPR036259">
    <property type="entry name" value="MFS_trans_sf"/>
</dbReference>
<dbReference type="NCBIfam" id="TIGR00901">
    <property type="entry name" value="2A0125"/>
    <property type="match status" value="1"/>
</dbReference>
<dbReference type="PANTHER" id="PTHR12778:SF10">
    <property type="entry name" value="MAJOR FACILITATOR SUPERFAMILY DOMAIN-CONTAINING PROTEIN 3"/>
    <property type="match status" value="1"/>
</dbReference>
<dbReference type="PANTHER" id="PTHR12778">
    <property type="entry name" value="SOLUTE CARRIER FAMILY 33 ACETYL-COA TRANSPORTER -RELATED"/>
    <property type="match status" value="1"/>
</dbReference>
<dbReference type="Pfam" id="PF07690">
    <property type="entry name" value="MFS_1"/>
    <property type="match status" value="1"/>
</dbReference>
<dbReference type="SUPFAM" id="SSF103473">
    <property type="entry name" value="MFS general substrate transporter"/>
    <property type="match status" value="1"/>
</dbReference>
<dbReference type="PROSITE" id="PS50850">
    <property type="entry name" value="MFS"/>
    <property type="match status" value="1"/>
</dbReference>
<name>AMPG1_RICTY</name>
<proteinExistence type="inferred from homology"/>